<reference key="1">
    <citation type="journal article" date="2011" name="MBio">
        <title>Novel metabolic attributes of the genus Cyanothece, comprising a group of unicellular nitrogen-fixing Cyanobacteria.</title>
        <authorList>
            <person name="Bandyopadhyay A."/>
            <person name="Elvitigala T."/>
            <person name="Welsh E."/>
            <person name="Stockel J."/>
            <person name="Liberton M."/>
            <person name="Min H."/>
            <person name="Sherman L.A."/>
            <person name="Pakrasi H.B."/>
        </authorList>
    </citation>
    <scope>NUCLEOTIDE SEQUENCE [LARGE SCALE GENOMIC DNA]</scope>
    <source>
        <strain>PCC 8801 / RF-1</strain>
    </source>
</reference>
<gene>
    <name evidence="1" type="primary">psaC</name>
    <name type="ordered locus">PCC8801_1278</name>
</gene>
<name>PSAC_RIPO1</name>
<evidence type="ECO:0000255" key="1">
    <source>
        <dbReference type="HAMAP-Rule" id="MF_01303"/>
    </source>
</evidence>
<proteinExistence type="inferred from homology"/>
<protein>
    <recommendedName>
        <fullName evidence="1">Photosystem I iron-sulfur center</fullName>
        <ecNumber evidence="1">1.97.1.12</ecNumber>
    </recommendedName>
    <alternativeName>
        <fullName evidence="1">9 kDa polypeptide</fullName>
    </alternativeName>
    <alternativeName>
        <fullName evidence="1">PSI-C</fullName>
    </alternativeName>
    <alternativeName>
        <fullName evidence="1">Photosystem I subunit VII</fullName>
    </alternativeName>
    <alternativeName>
        <fullName evidence="1">PsaC</fullName>
    </alternativeName>
</protein>
<feature type="chain" id="PRO_1000140645" description="Photosystem I iron-sulfur center">
    <location>
        <begin position="1"/>
        <end position="81"/>
    </location>
</feature>
<feature type="domain" description="4Fe-4S ferredoxin-type 1" evidence="1">
    <location>
        <begin position="1"/>
        <end position="31"/>
    </location>
</feature>
<feature type="domain" description="4Fe-4S ferredoxin-type 2" evidence="1">
    <location>
        <begin position="39"/>
        <end position="68"/>
    </location>
</feature>
<feature type="binding site" evidence="1">
    <location>
        <position position="11"/>
    </location>
    <ligand>
        <name>[4Fe-4S] cluster</name>
        <dbReference type="ChEBI" id="CHEBI:49883"/>
        <label>1</label>
    </ligand>
</feature>
<feature type="binding site" evidence="1">
    <location>
        <position position="14"/>
    </location>
    <ligand>
        <name>[4Fe-4S] cluster</name>
        <dbReference type="ChEBI" id="CHEBI:49883"/>
        <label>1</label>
    </ligand>
</feature>
<feature type="binding site" evidence="1">
    <location>
        <position position="17"/>
    </location>
    <ligand>
        <name>[4Fe-4S] cluster</name>
        <dbReference type="ChEBI" id="CHEBI:49883"/>
        <label>1</label>
    </ligand>
</feature>
<feature type="binding site" evidence="1">
    <location>
        <position position="21"/>
    </location>
    <ligand>
        <name>[4Fe-4S] cluster</name>
        <dbReference type="ChEBI" id="CHEBI:49883"/>
        <label>2</label>
    </ligand>
</feature>
<feature type="binding site" evidence="1">
    <location>
        <position position="48"/>
    </location>
    <ligand>
        <name>[4Fe-4S] cluster</name>
        <dbReference type="ChEBI" id="CHEBI:49883"/>
        <label>2</label>
    </ligand>
</feature>
<feature type="binding site" evidence="1">
    <location>
        <position position="51"/>
    </location>
    <ligand>
        <name>[4Fe-4S] cluster</name>
        <dbReference type="ChEBI" id="CHEBI:49883"/>
        <label>2</label>
    </ligand>
</feature>
<feature type="binding site" evidence="1">
    <location>
        <position position="54"/>
    </location>
    <ligand>
        <name>[4Fe-4S] cluster</name>
        <dbReference type="ChEBI" id="CHEBI:49883"/>
        <label>2</label>
    </ligand>
</feature>
<feature type="binding site" evidence="1">
    <location>
        <position position="58"/>
    </location>
    <ligand>
        <name>[4Fe-4S] cluster</name>
        <dbReference type="ChEBI" id="CHEBI:49883"/>
        <label>1</label>
    </ligand>
</feature>
<sequence length="81" mass="8869">MSHKVKIYDTCIGCTQCVRACPLDVLEMVPWDGCKAAQIASSPRTEDCVGCKRCETACPTDFLSIRVYLGAETTRSMGLAY</sequence>
<dbReference type="EC" id="1.97.1.12" evidence="1"/>
<dbReference type="EMBL" id="CP001287">
    <property type="protein sequence ID" value="ACK65343.1"/>
    <property type="molecule type" value="Genomic_DNA"/>
</dbReference>
<dbReference type="RefSeq" id="WP_012594617.1">
    <property type="nucleotide sequence ID" value="NC_011726.1"/>
</dbReference>
<dbReference type="SMR" id="B7K3K1"/>
<dbReference type="STRING" id="41431.PCC8801_1278"/>
<dbReference type="KEGG" id="cyp:PCC8801_1278"/>
<dbReference type="eggNOG" id="COG1143">
    <property type="taxonomic scope" value="Bacteria"/>
</dbReference>
<dbReference type="HOGENOM" id="CLU_139698_8_0_3"/>
<dbReference type="OrthoDB" id="9804603at2"/>
<dbReference type="Proteomes" id="UP000008204">
    <property type="component" value="Chromosome"/>
</dbReference>
<dbReference type="GO" id="GO:0009522">
    <property type="term" value="C:photosystem I"/>
    <property type="evidence" value="ECO:0007669"/>
    <property type="project" value="UniProtKB-KW"/>
</dbReference>
<dbReference type="GO" id="GO:0031676">
    <property type="term" value="C:plasma membrane-derived thylakoid membrane"/>
    <property type="evidence" value="ECO:0007669"/>
    <property type="project" value="UniProtKB-SubCell"/>
</dbReference>
<dbReference type="GO" id="GO:0051539">
    <property type="term" value="F:4 iron, 4 sulfur cluster binding"/>
    <property type="evidence" value="ECO:0007669"/>
    <property type="project" value="UniProtKB-KW"/>
</dbReference>
<dbReference type="GO" id="GO:0009055">
    <property type="term" value="F:electron transfer activity"/>
    <property type="evidence" value="ECO:0007669"/>
    <property type="project" value="UniProtKB-UniRule"/>
</dbReference>
<dbReference type="GO" id="GO:0046872">
    <property type="term" value="F:metal ion binding"/>
    <property type="evidence" value="ECO:0007669"/>
    <property type="project" value="UniProtKB-KW"/>
</dbReference>
<dbReference type="GO" id="GO:0016491">
    <property type="term" value="F:oxidoreductase activity"/>
    <property type="evidence" value="ECO:0007669"/>
    <property type="project" value="UniProtKB-KW"/>
</dbReference>
<dbReference type="GO" id="GO:0009773">
    <property type="term" value="P:photosynthetic electron transport in photosystem I"/>
    <property type="evidence" value="ECO:0007669"/>
    <property type="project" value="InterPro"/>
</dbReference>
<dbReference type="FunFam" id="3.30.70.20:FF:000001">
    <property type="entry name" value="Photosystem I iron-sulfur center"/>
    <property type="match status" value="1"/>
</dbReference>
<dbReference type="Gene3D" id="3.30.70.20">
    <property type="match status" value="1"/>
</dbReference>
<dbReference type="HAMAP" id="MF_01303">
    <property type="entry name" value="PSI_PsaC"/>
    <property type="match status" value="1"/>
</dbReference>
<dbReference type="InterPro" id="IPR017896">
    <property type="entry name" value="4Fe4S_Fe-S-bd"/>
</dbReference>
<dbReference type="InterPro" id="IPR017900">
    <property type="entry name" value="4Fe4S_Fe_S_CS"/>
</dbReference>
<dbReference type="InterPro" id="IPR050157">
    <property type="entry name" value="PSI_iron-sulfur_center"/>
</dbReference>
<dbReference type="InterPro" id="IPR017491">
    <property type="entry name" value="PSI_PsaC"/>
</dbReference>
<dbReference type="NCBIfam" id="TIGR03048">
    <property type="entry name" value="PS_I_psaC"/>
    <property type="match status" value="1"/>
</dbReference>
<dbReference type="PANTHER" id="PTHR24960:SF79">
    <property type="entry name" value="PHOTOSYSTEM I IRON-SULFUR CENTER"/>
    <property type="match status" value="1"/>
</dbReference>
<dbReference type="PANTHER" id="PTHR24960">
    <property type="entry name" value="PHOTOSYSTEM I IRON-SULFUR CENTER-RELATED"/>
    <property type="match status" value="1"/>
</dbReference>
<dbReference type="Pfam" id="PF12838">
    <property type="entry name" value="Fer4_7"/>
    <property type="match status" value="1"/>
</dbReference>
<dbReference type="SUPFAM" id="SSF54862">
    <property type="entry name" value="4Fe-4S ferredoxins"/>
    <property type="match status" value="1"/>
</dbReference>
<dbReference type="PROSITE" id="PS00198">
    <property type="entry name" value="4FE4S_FER_1"/>
    <property type="match status" value="2"/>
</dbReference>
<dbReference type="PROSITE" id="PS51379">
    <property type="entry name" value="4FE4S_FER_2"/>
    <property type="match status" value="2"/>
</dbReference>
<organism>
    <name type="scientific">Rippkaea orientalis (strain PCC 8801 / RF-1)</name>
    <name type="common">Cyanothece sp. (strain PCC 8801)</name>
    <dbReference type="NCBI Taxonomy" id="41431"/>
    <lineage>
        <taxon>Bacteria</taxon>
        <taxon>Bacillati</taxon>
        <taxon>Cyanobacteriota</taxon>
        <taxon>Cyanophyceae</taxon>
        <taxon>Oscillatoriophycideae</taxon>
        <taxon>Chroococcales</taxon>
        <taxon>Aphanothecaceae</taxon>
        <taxon>Rippkaea</taxon>
        <taxon>Rippkaea orientalis</taxon>
    </lineage>
</organism>
<keyword id="KW-0004">4Fe-4S</keyword>
<keyword id="KW-0249">Electron transport</keyword>
<keyword id="KW-0408">Iron</keyword>
<keyword id="KW-0411">Iron-sulfur</keyword>
<keyword id="KW-0472">Membrane</keyword>
<keyword id="KW-0479">Metal-binding</keyword>
<keyword id="KW-0560">Oxidoreductase</keyword>
<keyword id="KW-0602">Photosynthesis</keyword>
<keyword id="KW-0603">Photosystem I</keyword>
<keyword id="KW-1185">Reference proteome</keyword>
<keyword id="KW-0677">Repeat</keyword>
<keyword id="KW-0793">Thylakoid</keyword>
<keyword id="KW-0813">Transport</keyword>
<comment type="function">
    <text evidence="1">Apoprotein for the two 4Fe-4S centers FA and FB of photosystem I (PSI); essential for photochemical activity. FB is the terminal electron acceptor of PSI, donating electrons to ferredoxin. The C-terminus interacts with PsaA/B/D and helps assemble the protein into the PSI complex. Required for binding of PsaD and PsaE to PSI. PSI is a plastocyanin/cytochrome c6-ferredoxin oxidoreductase, converting photonic excitation into a charge separation, which transfers an electron from the donor P700 chlorophyll pair to the spectroscopically characterized acceptors A0, A1, FX, FA and FB in turn.</text>
</comment>
<comment type="catalytic activity">
    <reaction evidence="1">
        <text>reduced [plastocyanin] + hnu + oxidized [2Fe-2S]-[ferredoxin] = oxidized [plastocyanin] + reduced [2Fe-2S]-[ferredoxin]</text>
        <dbReference type="Rhea" id="RHEA:30407"/>
        <dbReference type="Rhea" id="RHEA-COMP:10000"/>
        <dbReference type="Rhea" id="RHEA-COMP:10001"/>
        <dbReference type="Rhea" id="RHEA-COMP:10039"/>
        <dbReference type="Rhea" id="RHEA-COMP:10040"/>
        <dbReference type="ChEBI" id="CHEBI:29036"/>
        <dbReference type="ChEBI" id="CHEBI:30212"/>
        <dbReference type="ChEBI" id="CHEBI:33737"/>
        <dbReference type="ChEBI" id="CHEBI:33738"/>
        <dbReference type="ChEBI" id="CHEBI:49552"/>
        <dbReference type="EC" id="1.97.1.12"/>
    </reaction>
</comment>
<comment type="cofactor">
    <cofactor evidence="1">
        <name>[4Fe-4S] cluster</name>
        <dbReference type="ChEBI" id="CHEBI:49883"/>
    </cofactor>
    <text evidence="1">Binds 2 [4Fe-4S] clusters. Cluster 2 is most probably the spectroscopically characterized electron acceptor FA and cluster 1 is most probably FB.</text>
</comment>
<comment type="subunit">
    <text evidence="1">The cyanobacterial PSI reaction center is composed of one copy each of PsaA,B,C,D,E,F,I,J,K,L,M and X, and forms trimeric complexes.</text>
</comment>
<comment type="subcellular location">
    <subcellularLocation>
        <location evidence="1">Cellular thylakoid membrane</location>
        <topology evidence="1">Peripheral membrane protein</topology>
        <orientation evidence="1">Cytoplasmic side</orientation>
    </subcellularLocation>
</comment>
<accession>B7K3K1</accession>